<dbReference type="EMBL" id="CP000110">
    <property type="protein sequence ID" value="ABB34125.1"/>
    <property type="molecule type" value="Genomic_DNA"/>
</dbReference>
<dbReference type="RefSeq" id="WP_006849745.1">
    <property type="nucleotide sequence ID" value="NC_007516.1"/>
</dbReference>
<dbReference type="SMR" id="Q3AMQ7"/>
<dbReference type="STRING" id="110662.Syncc9605_0349"/>
<dbReference type="KEGG" id="syd:Syncc9605_0349"/>
<dbReference type="eggNOG" id="COG0103">
    <property type="taxonomic scope" value="Bacteria"/>
</dbReference>
<dbReference type="HOGENOM" id="CLU_046483_2_1_3"/>
<dbReference type="OrthoDB" id="9803965at2"/>
<dbReference type="GO" id="GO:0022627">
    <property type="term" value="C:cytosolic small ribosomal subunit"/>
    <property type="evidence" value="ECO:0007669"/>
    <property type="project" value="TreeGrafter"/>
</dbReference>
<dbReference type="GO" id="GO:0003723">
    <property type="term" value="F:RNA binding"/>
    <property type="evidence" value="ECO:0007669"/>
    <property type="project" value="TreeGrafter"/>
</dbReference>
<dbReference type="GO" id="GO:0003735">
    <property type="term" value="F:structural constituent of ribosome"/>
    <property type="evidence" value="ECO:0007669"/>
    <property type="project" value="InterPro"/>
</dbReference>
<dbReference type="GO" id="GO:0006412">
    <property type="term" value="P:translation"/>
    <property type="evidence" value="ECO:0007669"/>
    <property type="project" value="UniProtKB-UniRule"/>
</dbReference>
<dbReference type="FunFam" id="3.30.230.10:FF:000001">
    <property type="entry name" value="30S ribosomal protein S9"/>
    <property type="match status" value="1"/>
</dbReference>
<dbReference type="Gene3D" id="3.30.230.10">
    <property type="match status" value="1"/>
</dbReference>
<dbReference type="HAMAP" id="MF_00532_B">
    <property type="entry name" value="Ribosomal_uS9_B"/>
    <property type="match status" value="1"/>
</dbReference>
<dbReference type="InterPro" id="IPR020568">
    <property type="entry name" value="Ribosomal_Su5_D2-typ_SF"/>
</dbReference>
<dbReference type="InterPro" id="IPR000754">
    <property type="entry name" value="Ribosomal_uS9"/>
</dbReference>
<dbReference type="InterPro" id="IPR023035">
    <property type="entry name" value="Ribosomal_uS9_bac/plastid"/>
</dbReference>
<dbReference type="InterPro" id="IPR020574">
    <property type="entry name" value="Ribosomal_uS9_CS"/>
</dbReference>
<dbReference type="InterPro" id="IPR014721">
    <property type="entry name" value="Ribsml_uS5_D2-typ_fold_subgr"/>
</dbReference>
<dbReference type="NCBIfam" id="NF001099">
    <property type="entry name" value="PRK00132.1"/>
    <property type="match status" value="1"/>
</dbReference>
<dbReference type="PANTHER" id="PTHR21569">
    <property type="entry name" value="RIBOSOMAL PROTEIN S9"/>
    <property type="match status" value="1"/>
</dbReference>
<dbReference type="PANTHER" id="PTHR21569:SF1">
    <property type="entry name" value="SMALL RIBOSOMAL SUBUNIT PROTEIN US9M"/>
    <property type="match status" value="1"/>
</dbReference>
<dbReference type="Pfam" id="PF00380">
    <property type="entry name" value="Ribosomal_S9"/>
    <property type="match status" value="1"/>
</dbReference>
<dbReference type="SUPFAM" id="SSF54211">
    <property type="entry name" value="Ribosomal protein S5 domain 2-like"/>
    <property type="match status" value="1"/>
</dbReference>
<dbReference type="PROSITE" id="PS00360">
    <property type="entry name" value="RIBOSOMAL_S9"/>
    <property type="match status" value="1"/>
</dbReference>
<feature type="chain" id="PRO_1000051356" description="Small ribosomal subunit protein uS9">
    <location>
        <begin position="1"/>
        <end position="133"/>
    </location>
</feature>
<feature type="region of interest" description="Disordered" evidence="2">
    <location>
        <begin position="94"/>
        <end position="133"/>
    </location>
</feature>
<feature type="compositionally biased region" description="Basic and acidic residues" evidence="2">
    <location>
        <begin position="95"/>
        <end position="113"/>
    </location>
</feature>
<feature type="compositionally biased region" description="Basic residues" evidence="2">
    <location>
        <begin position="114"/>
        <end position="133"/>
    </location>
</feature>
<reference key="1">
    <citation type="submission" date="2005-07" db="EMBL/GenBank/DDBJ databases">
        <title>Complete sequence of Synechococcus sp. CC9605.</title>
        <authorList>
            <consortium name="US DOE Joint Genome Institute"/>
            <person name="Copeland A."/>
            <person name="Lucas S."/>
            <person name="Lapidus A."/>
            <person name="Barry K."/>
            <person name="Detter J.C."/>
            <person name="Glavina T."/>
            <person name="Hammon N."/>
            <person name="Israni S."/>
            <person name="Pitluck S."/>
            <person name="Schmutz J."/>
            <person name="Martinez M."/>
            <person name="Larimer F."/>
            <person name="Land M."/>
            <person name="Kyrpides N."/>
            <person name="Ivanova N."/>
            <person name="Richardson P."/>
        </authorList>
    </citation>
    <scope>NUCLEOTIDE SEQUENCE [LARGE SCALE GENOMIC DNA]</scope>
    <source>
        <strain>CC9605</strain>
    </source>
</reference>
<sequence>MSNNSVVYWGTGRRKTSVARVRLVPGNGTITINGRPGDNYLNYNPSYIAAVKAPLETLGLSSEYDILVNVHGGGLTGQSGAIKQGAARALCELSADNRKPLKTEGHLSRDPRAKERRKYGLKKARKAPQFSKR</sequence>
<accession>Q3AMQ7</accession>
<organism>
    <name type="scientific">Synechococcus sp. (strain CC9605)</name>
    <dbReference type="NCBI Taxonomy" id="110662"/>
    <lineage>
        <taxon>Bacteria</taxon>
        <taxon>Bacillati</taxon>
        <taxon>Cyanobacteriota</taxon>
        <taxon>Cyanophyceae</taxon>
        <taxon>Synechococcales</taxon>
        <taxon>Synechococcaceae</taxon>
        <taxon>Synechococcus</taxon>
    </lineage>
</organism>
<gene>
    <name evidence="1" type="primary">rpsI</name>
    <name evidence="1" type="synonym">rps9</name>
    <name type="ordered locus">Syncc9605_0349</name>
</gene>
<name>RS9_SYNSC</name>
<comment type="similarity">
    <text evidence="1">Belongs to the universal ribosomal protein uS9 family.</text>
</comment>
<protein>
    <recommendedName>
        <fullName evidence="1">Small ribosomal subunit protein uS9</fullName>
    </recommendedName>
    <alternativeName>
        <fullName evidence="3">30S ribosomal protein S9</fullName>
    </alternativeName>
</protein>
<evidence type="ECO:0000255" key="1">
    <source>
        <dbReference type="HAMAP-Rule" id="MF_00532"/>
    </source>
</evidence>
<evidence type="ECO:0000256" key="2">
    <source>
        <dbReference type="SAM" id="MobiDB-lite"/>
    </source>
</evidence>
<evidence type="ECO:0000305" key="3"/>
<keyword id="KW-0687">Ribonucleoprotein</keyword>
<keyword id="KW-0689">Ribosomal protein</keyword>
<proteinExistence type="inferred from homology"/>